<name>TRMD_BURCH</name>
<evidence type="ECO:0000255" key="1">
    <source>
        <dbReference type="HAMAP-Rule" id="MF_00605"/>
    </source>
</evidence>
<organism>
    <name type="scientific">Burkholderia cenocepacia (strain HI2424)</name>
    <dbReference type="NCBI Taxonomy" id="331272"/>
    <lineage>
        <taxon>Bacteria</taxon>
        <taxon>Pseudomonadati</taxon>
        <taxon>Pseudomonadota</taxon>
        <taxon>Betaproteobacteria</taxon>
        <taxon>Burkholderiales</taxon>
        <taxon>Burkholderiaceae</taxon>
        <taxon>Burkholderia</taxon>
        <taxon>Burkholderia cepacia complex</taxon>
    </lineage>
</organism>
<keyword id="KW-0963">Cytoplasm</keyword>
<keyword id="KW-0489">Methyltransferase</keyword>
<keyword id="KW-0949">S-adenosyl-L-methionine</keyword>
<keyword id="KW-0808">Transferase</keyword>
<keyword id="KW-0819">tRNA processing</keyword>
<dbReference type="EC" id="2.1.1.228" evidence="1"/>
<dbReference type="EMBL" id="CP000458">
    <property type="protein sequence ID" value="ABK07824.1"/>
    <property type="molecule type" value="Genomic_DNA"/>
</dbReference>
<dbReference type="RefSeq" id="WP_006476548.1">
    <property type="nucleotide sequence ID" value="NC_008542.1"/>
</dbReference>
<dbReference type="SMR" id="A0K5P7"/>
<dbReference type="GeneID" id="93192684"/>
<dbReference type="KEGG" id="bch:Bcen2424_1071"/>
<dbReference type="HOGENOM" id="CLU_047363_0_2_4"/>
<dbReference type="GO" id="GO:0005829">
    <property type="term" value="C:cytosol"/>
    <property type="evidence" value="ECO:0007669"/>
    <property type="project" value="TreeGrafter"/>
</dbReference>
<dbReference type="GO" id="GO:0052906">
    <property type="term" value="F:tRNA (guanine(37)-N1)-methyltransferase activity"/>
    <property type="evidence" value="ECO:0007669"/>
    <property type="project" value="UniProtKB-UniRule"/>
</dbReference>
<dbReference type="GO" id="GO:0002939">
    <property type="term" value="P:tRNA N1-guanine methylation"/>
    <property type="evidence" value="ECO:0007669"/>
    <property type="project" value="TreeGrafter"/>
</dbReference>
<dbReference type="CDD" id="cd18080">
    <property type="entry name" value="TrmD-like"/>
    <property type="match status" value="1"/>
</dbReference>
<dbReference type="FunFam" id="1.10.1270.20:FF:000001">
    <property type="entry name" value="tRNA (guanine-N(1)-)-methyltransferase"/>
    <property type="match status" value="1"/>
</dbReference>
<dbReference type="FunFam" id="3.40.1280.10:FF:000001">
    <property type="entry name" value="tRNA (guanine-N(1)-)-methyltransferase"/>
    <property type="match status" value="1"/>
</dbReference>
<dbReference type="Gene3D" id="3.40.1280.10">
    <property type="match status" value="1"/>
</dbReference>
<dbReference type="Gene3D" id="1.10.1270.20">
    <property type="entry name" value="tRNA(m1g37)methyltransferase, domain 2"/>
    <property type="match status" value="1"/>
</dbReference>
<dbReference type="HAMAP" id="MF_00605">
    <property type="entry name" value="TrmD"/>
    <property type="match status" value="1"/>
</dbReference>
<dbReference type="InterPro" id="IPR029028">
    <property type="entry name" value="Alpha/beta_knot_MTases"/>
</dbReference>
<dbReference type="InterPro" id="IPR023148">
    <property type="entry name" value="tRNA_m1G_MeTrfase_C_sf"/>
</dbReference>
<dbReference type="InterPro" id="IPR002649">
    <property type="entry name" value="tRNA_m1G_MeTrfase_TrmD"/>
</dbReference>
<dbReference type="InterPro" id="IPR029026">
    <property type="entry name" value="tRNA_m1G_MTases_N"/>
</dbReference>
<dbReference type="InterPro" id="IPR016009">
    <property type="entry name" value="tRNA_MeTrfase_TRMD/TRM10"/>
</dbReference>
<dbReference type="NCBIfam" id="NF000648">
    <property type="entry name" value="PRK00026.1"/>
    <property type="match status" value="1"/>
</dbReference>
<dbReference type="NCBIfam" id="TIGR00088">
    <property type="entry name" value="trmD"/>
    <property type="match status" value="1"/>
</dbReference>
<dbReference type="PANTHER" id="PTHR46417">
    <property type="entry name" value="TRNA (GUANINE-N(1)-)-METHYLTRANSFERASE"/>
    <property type="match status" value="1"/>
</dbReference>
<dbReference type="PANTHER" id="PTHR46417:SF1">
    <property type="entry name" value="TRNA (GUANINE-N(1)-)-METHYLTRANSFERASE"/>
    <property type="match status" value="1"/>
</dbReference>
<dbReference type="Pfam" id="PF01746">
    <property type="entry name" value="tRNA_m1G_MT"/>
    <property type="match status" value="1"/>
</dbReference>
<dbReference type="PIRSF" id="PIRSF000386">
    <property type="entry name" value="tRNA_mtase"/>
    <property type="match status" value="1"/>
</dbReference>
<dbReference type="SUPFAM" id="SSF75217">
    <property type="entry name" value="alpha/beta knot"/>
    <property type="match status" value="1"/>
</dbReference>
<feature type="chain" id="PRO_1000006455" description="tRNA (guanine-N(1)-)-methyltransferase">
    <location>
        <begin position="1"/>
        <end position="264"/>
    </location>
</feature>
<feature type="binding site" evidence="1">
    <location>
        <position position="125"/>
    </location>
    <ligand>
        <name>S-adenosyl-L-methionine</name>
        <dbReference type="ChEBI" id="CHEBI:59789"/>
    </ligand>
</feature>
<feature type="binding site" evidence="1">
    <location>
        <begin position="145"/>
        <end position="150"/>
    </location>
    <ligand>
        <name>S-adenosyl-L-methionine</name>
        <dbReference type="ChEBI" id="CHEBI:59789"/>
    </ligand>
</feature>
<proteinExistence type="inferred from homology"/>
<sequence length="264" mass="29332">MNQVTESAVQFDVVTLFPEMFRALTDWGITSRAVKQGRFGLRTWNPRDFTTDNYRTVDDRPYGGGPGMVMLARPLEAAIDAAKAAQAEQGIASTRVVMMSPQGAPLTHDRAVRMAQEPGVVVLCGRYEAIDQRLLDRCVDEEISLGDFVLSGGELPAMAMMDAVVRLLPGVLNDSLSAVQDSFADGLLDCPHYTRPEEYDGVRVPDVLLGGHHAEIEKWRRQEALRNTLRKRPDLIVRARREKLLSRADEAWLANLAREAKDAS</sequence>
<gene>
    <name evidence="1" type="primary">trmD</name>
    <name type="ordered locus">Bcen2424_1071</name>
</gene>
<accession>A0K5P7</accession>
<comment type="function">
    <text evidence="1">Specifically methylates guanosine-37 in various tRNAs.</text>
</comment>
<comment type="catalytic activity">
    <reaction evidence="1">
        <text>guanosine(37) in tRNA + S-adenosyl-L-methionine = N(1)-methylguanosine(37) in tRNA + S-adenosyl-L-homocysteine + H(+)</text>
        <dbReference type="Rhea" id="RHEA:36899"/>
        <dbReference type="Rhea" id="RHEA-COMP:10145"/>
        <dbReference type="Rhea" id="RHEA-COMP:10147"/>
        <dbReference type="ChEBI" id="CHEBI:15378"/>
        <dbReference type="ChEBI" id="CHEBI:57856"/>
        <dbReference type="ChEBI" id="CHEBI:59789"/>
        <dbReference type="ChEBI" id="CHEBI:73542"/>
        <dbReference type="ChEBI" id="CHEBI:74269"/>
        <dbReference type="EC" id="2.1.1.228"/>
    </reaction>
</comment>
<comment type="subunit">
    <text evidence="1">Homodimer.</text>
</comment>
<comment type="subcellular location">
    <subcellularLocation>
        <location evidence="1">Cytoplasm</location>
    </subcellularLocation>
</comment>
<comment type="similarity">
    <text evidence="1">Belongs to the RNA methyltransferase TrmD family.</text>
</comment>
<reference key="1">
    <citation type="submission" date="2006-08" db="EMBL/GenBank/DDBJ databases">
        <title>Complete sequence of chromosome 1 of Burkholderia cenocepacia HI2424.</title>
        <authorList>
            <person name="Copeland A."/>
            <person name="Lucas S."/>
            <person name="Lapidus A."/>
            <person name="Barry K."/>
            <person name="Detter J.C."/>
            <person name="Glavina del Rio T."/>
            <person name="Hammon N."/>
            <person name="Israni S."/>
            <person name="Pitluck S."/>
            <person name="Chain P."/>
            <person name="Malfatti S."/>
            <person name="Shin M."/>
            <person name="Vergez L."/>
            <person name="Schmutz J."/>
            <person name="Larimer F."/>
            <person name="Land M."/>
            <person name="Hauser L."/>
            <person name="Kyrpides N."/>
            <person name="Kim E."/>
            <person name="LiPuma J.J."/>
            <person name="Gonzalez C.F."/>
            <person name="Konstantinidis K."/>
            <person name="Tiedje J.M."/>
            <person name="Richardson P."/>
        </authorList>
    </citation>
    <scope>NUCLEOTIDE SEQUENCE [LARGE SCALE GENOMIC DNA]</scope>
    <source>
        <strain>HI2424</strain>
    </source>
</reference>
<protein>
    <recommendedName>
        <fullName evidence="1">tRNA (guanine-N(1)-)-methyltransferase</fullName>
        <ecNumber evidence="1">2.1.1.228</ecNumber>
    </recommendedName>
    <alternativeName>
        <fullName evidence="1">M1G-methyltransferase</fullName>
    </alternativeName>
    <alternativeName>
        <fullName evidence="1">tRNA [GM37] methyltransferase</fullName>
    </alternativeName>
</protein>